<proteinExistence type="inferred from homology"/>
<name>CYB_SORHY</name>
<keyword id="KW-0249">Electron transport</keyword>
<keyword id="KW-0349">Heme</keyword>
<keyword id="KW-0408">Iron</keyword>
<keyword id="KW-0472">Membrane</keyword>
<keyword id="KW-0479">Metal-binding</keyword>
<keyword id="KW-0496">Mitochondrion</keyword>
<keyword id="KW-0999">Mitochondrion inner membrane</keyword>
<keyword id="KW-0679">Respiratory chain</keyword>
<keyword id="KW-0812">Transmembrane</keyword>
<keyword id="KW-1133">Transmembrane helix</keyword>
<keyword id="KW-0813">Transport</keyword>
<keyword id="KW-0830">Ubiquinone</keyword>
<reference key="1">
    <citation type="journal article" date="2003" name="J. Mammal.">
        <title>Phylogenetic diversification within the Sorex cinereus group (Soricidae).</title>
        <authorList>
            <person name="Demboski J.R."/>
            <person name="Cook J.A."/>
        </authorList>
    </citation>
    <scope>NUCLEOTIDE SEQUENCE [GENOMIC DNA]</scope>
    <source>
        <strain>Isolate AFTC 7982</strain>
    </source>
</reference>
<reference key="2">
    <citation type="journal article" date="1999" name="Mol. Phylogenet. Evol.">
        <title>Molecular phylogeny and evolution of Sorex shrews (Soricidae: Insectivora) inferred from mitochondrial DNA sequence data.</title>
        <authorList>
            <person name="Fumagalli L."/>
            <person name="Taberlet P."/>
            <person name="Stewart D.T."/>
            <person name="Gielly L."/>
            <person name="Hausser J."/>
            <person name="Vogel P."/>
        </authorList>
    </citation>
    <scope>NUCLEOTIDE SEQUENCE [GENOMIC DNA] OF 44-379</scope>
</reference>
<feature type="chain" id="PRO_0000061565" description="Cytochrome b">
    <location>
        <begin position="1"/>
        <end position="379"/>
    </location>
</feature>
<feature type="transmembrane region" description="Helical" evidence="2">
    <location>
        <begin position="33"/>
        <end position="53"/>
    </location>
</feature>
<feature type="transmembrane region" description="Helical" evidence="2">
    <location>
        <begin position="77"/>
        <end position="98"/>
    </location>
</feature>
<feature type="transmembrane region" description="Helical" evidence="2">
    <location>
        <begin position="113"/>
        <end position="133"/>
    </location>
</feature>
<feature type="transmembrane region" description="Helical" evidence="2">
    <location>
        <begin position="178"/>
        <end position="198"/>
    </location>
</feature>
<feature type="transmembrane region" description="Helical" evidence="2">
    <location>
        <begin position="226"/>
        <end position="246"/>
    </location>
</feature>
<feature type="transmembrane region" description="Helical" evidence="2">
    <location>
        <begin position="288"/>
        <end position="308"/>
    </location>
</feature>
<feature type="transmembrane region" description="Helical" evidence="2">
    <location>
        <begin position="320"/>
        <end position="340"/>
    </location>
</feature>
<feature type="transmembrane region" description="Helical" evidence="2">
    <location>
        <begin position="347"/>
        <end position="367"/>
    </location>
</feature>
<feature type="binding site" description="axial binding residue" evidence="2">
    <location>
        <position position="83"/>
    </location>
    <ligand>
        <name>heme b</name>
        <dbReference type="ChEBI" id="CHEBI:60344"/>
        <label>b562</label>
    </ligand>
    <ligandPart>
        <name>Fe</name>
        <dbReference type="ChEBI" id="CHEBI:18248"/>
    </ligandPart>
</feature>
<feature type="binding site" description="axial binding residue" evidence="2">
    <location>
        <position position="97"/>
    </location>
    <ligand>
        <name>heme b</name>
        <dbReference type="ChEBI" id="CHEBI:60344"/>
        <label>b566</label>
    </ligand>
    <ligandPart>
        <name>Fe</name>
        <dbReference type="ChEBI" id="CHEBI:18248"/>
    </ligandPart>
</feature>
<feature type="binding site" description="axial binding residue" evidence="2">
    <location>
        <position position="182"/>
    </location>
    <ligand>
        <name>heme b</name>
        <dbReference type="ChEBI" id="CHEBI:60344"/>
        <label>b562</label>
    </ligand>
    <ligandPart>
        <name>Fe</name>
        <dbReference type="ChEBI" id="CHEBI:18248"/>
    </ligandPart>
</feature>
<feature type="binding site" description="axial binding residue" evidence="2">
    <location>
        <position position="196"/>
    </location>
    <ligand>
        <name>heme b</name>
        <dbReference type="ChEBI" id="CHEBI:60344"/>
        <label>b566</label>
    </ligand>
    <ligandPart>
        <name>Fe</name>
        <dbReference type="ChEBI" id="CHEBI:18248"/>
    </ligandPart>
</feature>
<feature type="binding site" evidence="2">
    <location>
        <position position="201"/>
    </location>
    <ligand>
        <name>a ubiquinone</name>
        <dbReference type="ChEBI" id="CHEBI:16389"/>
    </ligand>
</feature>
<feature type="sequence conflict" description="In Ref. 2; CAA04103." evidence="5" ref="2">
    <original>F</original>
    <variation>L</variation>
    <location>
        <position position="276"/>
    </location>
</feature>
<evidence type="ECO:0000250" key="1"/>
<evidence type="ECO:0000250" key="2">
    <source>
        <dbReference type="UniProtKB" id="P00157"/>
    </source>
</evidence>
<evidence type="ECO:0000255" key="3">
    <source>
        <dbReference type="PROSITE-ProRule" id="PRU00967"/>
    </source>
</evidence>
<evidence type="ECO:0000255" key="4">
    <source>
        <dbReference type="PROSITE-ProRule" id="PRU00968"/>
    </source>
</evidence>
<evidence type="ECO:0000305" key="5"/>
<comment type="function">
    <text evidence="2">Component of the ubiquinol-cytochrome c reductase complex (complex III or cytochrome b-c1 complex) that is part of the mitochondrial respiratory chain. The b-c1 complex mediates electron transfer from ubiquinol to cytochrome c. Contributes to the generation of a proton gradient across the mitochondrial membrane that is then used for ATP synthesis.</text>
</comment>
<comment type="cofactor">
    <cofactor evidence="2">
        <name>heme b</name>
        <dbReference type="ChEBI" id="CHEBI:60344"/>
    </cofactor>
    <text evidence="2">Binds 2 heme b groups non-covalently.</text>
</comment>
<comment type="subunit">
    <text evidence="2">The cytochrome bc1 complex contains 11 subunits: 3 respiratory subunits (MT-CYB, CYC1 and UQCRFS1), 2 core proteins (UQCRC1 and UQCRC2) and 6 low-molecular weight proteins (UQCRH/QCR6, UQCRB/QCR7, UQCRQ/QCR8, UQCR10/QCR9, UQCR11/QCR10 and a cleavage product of UQCRFS1). This cytochrome bc1 complex then forms a dimer.</text>
</comment>
<comment type="subcellular location">
    <subcellularLocation>
        <location evidence="2">Mitochondrion inner membrane</location>
        <topology evidence="2">Multi-pass membrane protein</topology>
    </subcellularLocation>
</comment>
<comment type="miscellaneous">
    <text evidence="1">Heme 1 (or BL or b562) is low-potential and absorbs at about 562 nm, and heme 2 (or BH or b566) is high-potential and absorbs at about 566 nm.</text>
</comment>
<comment type="similarity">
    <text evidence="3 4">Belongs to the cytochrome b family.</text>
</comment>
<comment type="caution">
    <text evidence="2">The full-length protein contains only eight transmembrane helices, not nine as predicted by bioinformatics tools.</text>
</comment>
<sequence length="379" mass="42581">MTNLRKTHPLMKIINSSFIDLPAPSNISSWWNFGSLLGVCLVVQILTGLFLAMHYTSDTMTAFSSVTHICRDVNYGWLIRYLHANGASMFFICLFLHIGRGLYYGSYMFLETWNIGVLLLFAVMATAFMGYVLPWGQMSFWGATVITNLLSAIPYIGSDLVEWIWGGFSVDKATLTRFFAFHFILPFIIAALAGVHLLFLHETGSNNPSGLCSDADKIPFHPYYTIKDILGVLLLILVLTSLVLFSPDLLGDPDNYTPANPLNTPPHIKPEWYFLFAYAILRSIPNKLGGVLALVLSILVLAVVPFLHTSKQRSMMFRPFSQCLFWILVADLLTLTWIGGQPVEHPFIIIGQLASILYFLLILVLMPLASLFENNLLKW</sequence>
<geneLocation type="mitochondrion"/>
<protein>
    <recommendedName>
        <fullName>Cytochrome b</fullName>
    </recommendedName>
    <alternativeName>
        <fullName>Complex III subunit 3</fullName>
    </alternativeName>
    <alternativeName>
        <fullName>Complex III subunit III</fullName>
    </alternativeName>
    <alternativeName>
        <fullName>Cytochrome b-c1 complex subunit 3</fullName>
    </alternativeName>
    <alternativeName>
        <fullName>Ubiquinol-cytochrome-c reductase complex cytochrome b subunit</fullName>
    </alternativeName>
</protein>
<accession>O79453</accession>
<accession>Q959S4</accession>
<dbReference type="EMBL" id="AF238040">
    <property type="protein sequence ID" value="AAK38823.2"/>
    <property type="molecule type" value="Genomic_DNA"/>
</dbReference>
<dbReference type="EMBL" id="AJ000460">
    <property type="protein sequence ID" value="CAA04103.1"/>
    <property type="molecule type" value="Genomic_DNA"/>
</dbReference>
<dbReference type="SMR" id="O79453"/>
<dbReference type="GO" id="GO:0005743">
    <property type="term" value="C:mitochondrial inner membrane"/>
    <property type="evidence" value="ECO:0007669"/>
    <property type="project" value="UniProtKB-SubCell"/>
</dbReference>
<dbReference type="GO" id="GO:0045275">
    <property type="term" value="C:respiratory chain complex III"/>
    <property type="evidence" value="ECO:0007669"/>
    <property type="project" value="InterPro"/>
</dbReference>
<dbReference type="GO" id="GO:0046872">
    <property type="term" value="F:metal ion binding"/>
    <property type="evidence" value="ECO:0007669"/>
    <property type="project" value="UniProtKB-KW"/>
</dbReference>
<dbReference type="GO" id="GO:0008121">
    <property type="term" value="F:ubiquinol-cytochrome-c reductase activity"/>
    <property type="evidence" value="ECO:0007669"/>
    <property type="project" value="InterPro"/>
</dbReference>
<dbReference type="GO" id="GO:0006122">
    <property type="term" value="P:mitochondrial electron transport, ubiquinol to cytochrome c"/>
    <property type="evidence" value="ECO:0007669"/>
    <property type="project" value="TreeGrafter"/>
</dbReference>
<dbReference type="CDD" id="cd00290">
    <property type="entry name" value="cytochrome_b_C"/>
    <property type="match status" value="1"/>
</dbReference>
<dbReference type="CDD" id="cd00284">
    <property type="entry name" value="Cytochrome_b_N"/>
    <property type="match status" value="1"/>
</dbReference>
<dbReference type="FunFam" id="1.20.810.10:FF:000002">
    <property type="entry name" value="Cytochrome b"/>
    <property type="match status" value="1"/>
</dbReference>
<dbReference type="Gene3D" id="1.20.810.10">
    <property type="entry name" value="Cytochrome Bc1 Complex, Chain C"/>
    <property type="match status" value="1"/>
</dbReference>
<dbReference type="InterPro" id="IPR005798">
    <property type="entry name" value="Cyt_b/b6_C"/>
</dbReference>
<dbReference type="InterPro" id="IPR036150">
    <property type="entry name" value="Cyt_b/b6_C_sf"/>
</dbReference>
<dbReference type="InterPro" id="IPR005797">
    <property type="entry name" value="Cyt_b/b6_N"/>
</dbReference>
<dbReference type="InterPro" id="IPR027387">
    <property type="entry name" value="Cytb/b6-like_sf"/>
</dbReference>
<dbReference type="InterPro" id="IPR030689">
    <property type="entry name" value="Cytochrome_b"/>
</dbReference>
<dbReference type="InterPro" id="IPR048260">
    <property type="entry name" value="Cytochrome_b_C_euk/bac"/>
</dbReference>
<dbReference type="InterPro" id="IPR048259">
    <property type="entry name" value="Cytochrome_b_N_euk/bac"/>
</dbReference>
<dbReference type="InterPro" id="IPR016174">
    <property type="entry name" value="Di-haem_cyt_TM"/>
</dbReference>
<dbReference type="PANTHER" id="PTHR19271">
    <property type="entry name" value="CYTOCHROME B"/>
    <property type="match status" value="1"/>
</dbReference>
<dbReference type="PANTHER" id="PTHR19271:SF16">
    <property type="entry name" value="CYTOCHROME B"/>
    <property type="match status" value="1"/>
</dbReference>
<dbReference type="Pfam" id="PF00032">
    <property type="entry name" value="Cytochrom_B_C"/>
    <property type="match status" value="1"/>
</dbReference>
<dbReference type="Pfam" id="PF00033">
    <property type="entry name" value="Cytochrome_B"/>
    <property type="match status" value="1"/>
</dbReference>
<dbReference type="PIRSF" id="PIRSF038885">
    <property type="entry name" value="COB"/>
    <property type="match status" value="1"/>
</dbReference>
<dbReference type="SUPFAM" id="SSF81648">
    <property type="entry name" value="a domain/subunit of cytochrome bc1 complex (Ubiquinol-cytochrome c reductase)"/>
    <property type="match status" value="1"/>
</dbReference>
<dbReference type="SUPFAM" id="SSF81342">
    <property type="entry name" value="Transmembrane di-heme cytochromes"/>
    <property type="match status" value="1"/>
</dbReference>
<dbReference type="PROSITE" id="PS51003">
    <property type="entry name" value="CYTB_CTER"/>
    <property type="match status" value="1"/>
</dbReference>
<dbReference type="PROSITE" id="PS51002">
    <property type="entry name" value="CYTB_NTER"/>
    <property type="match status" value="1"/>
</dbReference>
<organism>
    <name type="scientific">Sorex hoyi</name>
    <name type="common">American pygmy shrew</name>
    <dbReference type="NCBI Taxonomy" id="9384"/>
    <lineage>
        <taxon>Eukaryota</taxon>
        <taxon>Metazoa</taxon>
        <taxon>Chordata</taxon>
        <taxon>Craniata</taxon>
        <taxon>Vertebrata</taxon>
        <taxon>Euteleostomi</taxon>
        <taxon>Mammalia</taxon>
        <taxon>Eutheria</taxon>
        <taxon>Laurasiatheria</taxon>
        <taxon>Eulipotyphla</taxon>
        <taxon>Soricidae</taxon>
        <taxon>Soricinae</taxon>
        <taxon>Sorex</taxon>
    </lineage>
</organism>
<gene>
    <name type="primary">MT-CYB</name>
    <name type="synonym">COB</name>
    <name type="synonym">CYTB</name>
    <name type="synonym">MTCYB</name>
</gene>